<reference key="1">
    <citation type="journal article" date="2009" name="PLoS ONE">
        <title>Genome degradation in Brucella ovis corresponds with narrowing of its host range and tissue tropism.</title>
        <authorList>
            <person name="Tsolis R.M."/>
            <person name="Seshadri R."/>
            <person name="Santos R.L."/>
            <person name="Sangari F.J."/>
            <person name="Lobo J.M."/>
            <person name="de Jong M.F."/>
            <person name="Ren Q."/>
            <person name="Myers G."/>
            <person name="Brinkac L.M."/>
            <person name="Nelson W.C."/>
            <person name="Deboy R.T."/>
            <person name="Angiuoli S."/>
            <person name="Khouri H."/>
            <person name="Dimitrov G."/>
            <person name="Robinson J.R."/>
            <person name="Mulligan S."/>
            <person name="Walker R.L."/>
            <person name="Elzer P.E."/>
            <person name="Hassan K.A."/>
            <person name="Paulsen I.T."/>
        </authorList>
    </citation>
    <scope>NUCLEOTIDE SEQUENCE [LARGE SCALE GENOMIC DNA]</scope>
    <source>
        <strain>ATCC 25840 / 63/290 / NCTC 10512</strain>
    </source>
</reference>
<comment type="function">
    <text evidence="1">An accessory protein needed during the final step in the assembly of 30S ribosomal subunit, possibly for assembly of the head region. Essential for efficient processing of 16S rRNA. May be needed both before and after RbfA during the maturation of 16S rRNA. It has affinity for free ribosomal 30S subunits but not for 70S ribosomes.</text>
</comment>
<comment type="subunit">
    <text evidence="1">Binds ribosomal protein uS19.</text>
</comment>
<comment type="subcellular location">
    <subcellularLocation>
        <location evidence="1">Cytoplasm</location>
    </subcellularLocation>
</comment>
<comment type="domain">
    <text evidence="1">The PRC barrel domain binds ribosomal protein uS19.</text>
</comment>
<comment type="similarity">
    <text evidence="1">Belongs to the RimM family.</text>
</comment>
<keyword id="KW-0143">Chaperone</keyword>
<keyword id="KW-0963">Cytoplasm</keyword>
<keyword id="KW-0690">Ribosome biogenesis</keyword>
<keyword id="KW-0698">rRNA processing</keyword>
<name>RIMM_BRUO2</name>
<evidence type="ECO:0000255" key="1">
    <source>
        <dbReference type="HAMAP-Rule" id="MF_00014"/>
    </source>
</evidence>
<evidence type="ECO:0000256" key="2">
    <source>
        <dbReference type="SAM" id="MobiDB-lite"/>
    </source>
</evidence>
<sequence length="189" mass="20554">MPRPENPIQLAVIGAAHGTRGEVRVKTFTGDPLAIADYGLLYDEQGKAYEILEARVAKTVVIVRFKGVNDRNAAEALNGTELFIDRSQLPDEELDEDEFFQTDLIGLEAVDGDGKSYGVVSAIFDFGGGDLIELSEKGKRPMLIPFTEAAVPEIDFDKGIIKVEPHAAGLIADEHDNPPHESGKKPKKP</sequence>
<gene>
    <name evidence="1" type="primary">rimM</name>
    <name type="ordered locus">BOV_1843</name>
</gene>
<organism>
    <name type="scientific">Brucella ovis (strain ATCC 25840 / 63/290 / NCTC 10512)</name>
    <dbReference type="NCBI Taxonomy" id="444178"/>
    <lineage>
        <taxon>Bacteria</taxon>
        <taxon>Pseudomonadati</taxon>
        <taxon>Pseudomonadota</taxon>
        <taxon>Alphaproteobacteria</taxon>
        <taxon>Hyphomicrobiales</taxon>
        <taxon>Brucellaceae</taxon>
        <taxon>Brucella/Ochrobactrum group</taxon>
        <taxon>Brucella</taxon>
    </lineage>
</organism>
<feature type="chain" id="PRO_1000001156" description="Ribosome maturation factor RimM">
    <location>
        <begin position="1"/>
        <end position="189"/>
    </location>
</feature>
<feature type="domain" description="PRC barrel" evidence="1">
    <location>
        <begin position="96"/>
        <end position="169"/>
    </location>
</feature>
<feature type="region of interest" description="Disordered" evidence="2">
    <location>
        <begin position="168"/>
        <end position="189"/>
    </location>
</feature>
<feature type="compositionally biased region" description="Basic and acidic residues" evidence="2">
    <location>
        <begin position="172"/>
        <end position="189"/>
    </location>
</feature>
<protein>
    <recommendedName>
        <fullName evidence="1">Ribosome maturation factor RimM</fullName>
    </recommendedName>
</protein>
<accession>A5VSP2</accession>
<dbReference type="EMBL" id="CP000708">
    <property type="protein sequence ID" value="ABQ60849.1"/>
    <property type="molecule type" value="Genomic_DNA"/>
</dbReference>
<dbReference type="RefSeq" id="WP_002964983.1">
    <property type="nucleotide sequence ID" value="NC_009505.1"/>
</dbReference>
<dbReference type="SMR" id="A5VSP2"/>
<dbReference type="GeneID" id="93017753"/>
<dbReference type="KEGG" id="bov:BOV_1843"/>
<dbReference type="HOGENOM" id="CLU_077636_0_1_5"/>
<dbReference type="PhylomeDB" id="A5VSP2"/>
<dbReference type="Proteomes" id="UP000006383">
    <property type="component" value="Chromosome I"/>
</dbReference>
<dbReference type="GO" id="GO:0005737">
    <property type="term" value="C:cytoplasm"/>
    <property type="evidence" value="ECO:0007669"/>
    <property type="project" value="UniProtKB-SubCell"/>
</dbReference>
<dbReference type="GO" id="GO:0005840">
    <property type="term" value="C:ribosome"/>
    <property type="evidence" value="ECO:0007669"/>
    <property type="project" value="InterPro"/>
</dbReference>
<dbReference type="GO" id="GO:0043022">
    <property type="term" value="F:ribosome binding"/>
    <property type="evidence" value="ECO:0007669"/>
    <property type="project" value="InterPro"/>
</dbReference>
<dbReference type="GO" id="GO:0042274">
    <property type="term" value="P:ribosomal small subunit biogenesis"/>
    <property type="evidence" value="ECO:0007669"/>
    <property type="project" value="UniProtKB-UniRule"/>
</dbReference>
<dbReference type="GO" id="GO:0006364">
    <property type="term" value="P:rRNA processing"/>
    <property type="evidence" value="ECO:0007669"/>
    <property type="project" value="UniProtKB-UniRule"/>
</dbReference>
<dbReference type="Gene3D" id="2.30.30.240">
    <property type="entry name" value="PRC-barrel domain"/>
    <property type="match status" value="1"/>
</dbReference>
<dbReference type="Gene3D" id="2.40.30.60">
    <property type="entry name" value="RimM"/>
    <property type="match status" value="1"/>
</dbReference>
<dbReference type="HAMAP" id="MF_00014">
    <property type="entry name" value="Ribosome_mat_RimM"/>
    <property type="match status" value="1"/>
</dbReference>
<dbReference type="InterPro" id="IPR011033">
    <property type="entry name" value="PRC_barrel-like_sf"/>
</dbReference>
<dbReference type="InterPro" id="IPR056792">
    <property type="entry name" value="PRC_RimM"/>
</dbReference>
<dbReference type="InterPro" id="IPR011961">
    <property type="entry name" value="RimM"/>
</dbReference>
<dbReference type="InterPro" id="IPR002676">
    <property type="entry name" value="RimM_N"/>
</dbReference>
<dbReference type="InterPro" id="IPR036976">
    <property type="entry name" value="RimM_N_sf"/>
</dbReference>
<dbReference type="InterPro" id="IPR009000">
    <property type="entry name" value="Transl_B-barrel_sf"/>
</dbReference>
<dbReference type="NCBIfam" id="TIGR02273">
    <property type="entry name" value="16S_RimM"/>
    <property type="match status" value="1"/>
</dbReference>
<dbReference type="PANTHER" id="PTHR33692">
    <property type="entry name" value="RIBOSOME MATURATION FACTOR RIMM"/>
    <property type="match status" value="1"/>
</dbReference>
<dbReference type="PANTHER" id="PTHR33692:SF1">
    <property type="entry name" value="RIBOSOME MATURATION FACTOR RIMM"/>
    <property type="match status" value="1"/>
</dbReference>
<dbReference type="Pfam" id="PF24986">
    <property type="entry name" value="PRC_RimM"/>
    <property type="match status" value="1"/>
</dbReference>
<dbReference type="Pfam" id="PF01782">
    <property type="entry name" value="RimM"/>
    <property type="match status" value="1"/>
</dbReference>
<dbReference type="SUPFAM" id="SSF50346">
    <property type="entry name" value="PRC-barrel domain"/>
    <property type="match status" value="1"/>
</dbReference>
<dbReference type="SUPFAM" id="SSF50447">
    <property type="entry name" value="Translation proteins"/>
    <property type="match status" value="1"/>
</dbReference>
<proteinExistence type="inferred from homology"/>